<proteinExistence type="evidence at transcript level"/>
<accession>Q5RD29</accession>
<dbReference type="EMBL" id="CR858089">
    <property type="protein sequence ID" value="CAH90328.1"/>
    <property type="molecule type" value="mRNA"/>
</dbReference>
<dbReference type="RefSeq" id="NP_001127270.1">
    <property type="nucleotide sequence ID" value="NM_001133798.1"/>
</dbReference>
<dbReference type="RefSeq" id="XP_002833668.1">
    <property type="nucleotide sequence ID" value="XM_002833622.3"/>
</dbReference>
<dbReference type="RefSeq" id="XP_024110446.1">
    <property type="nucleotide sequence ID" value="XM_024254678.3"/>
</dbReference>
<dbReference type="SMR" id="Q5RD29"/>
<dbReference type="FunCoup" id="Q5RD29">
    <property type="interactions" value="4366"/>
</dbReference>
<dbReference type="STRING" id="9601.ENSPPYP00000004689"/>
<dbReference type="Ensembl" id="ENSPPYT00000049112.1">
    <property type="protein sequence ID" value="ENSPPYP00000038308.1"/>
    <property type="gene ID" value="ENSPPYG00000032041.1"/>
</dbReference>
<dbReference type="GeneID" id="100174327"/>
<dbReference type="KEGG" id="pon:100174327"/>
<dbReference type="CTD" id="84285"/>
<dbReference type="eggNOG" id="KOG2925">
    <property type="taxonomic scope" value="Eukaryota"/>
</dbReference>
<dbReference type="GeneTree" id="ENSGT00390000011180"/>
<dbReference type="HOGENOM" id="CLU_106477_2_1_1"/>
<dbReference type="InParanoid" id="Q5RD29"/>
<dbReference type="OMA" id="FRKNIWV"/>
<dbReference type="OrthoDB" id="1738325at2759"/>
<dbReference type="TreeFam" id="TF314439"/>
<dbReference type="Proteomes" id="UP000001595">
    <property type="component" value="Chromosome 11"/>
</dbReference>
<dbReference type="GO" id="GO:0005829">
    <property type="term" value="C:cytosol"/>
    <property type="evidence" value="ECO:0007669"/>
    <property type="project" value="Ensembl"/>
</dbReference>
<dbReference type="GO" id="GO:0005654">
    <property type="term" value="C:nucleoplasm"/>
    <property type="evidence" value="ECO:0007669"/>
    <property type="project" value="Ensembl"/>
</dbReference>
<dbReference type="GO" id="GO:0003723">
    <property type="term" value="F:RNA binding"/>
    <property type="evidence" value="ECO:0007669"/>
    <property type="project" value="UniProtKB-KW"/>
</dbReference>
<dbReference type="GO" id="GO:0003743">
    <property type="term" value="F:translation initiation factor activity"/>
    <property type="evidence" value="ECO:0007669"/>
    <property type="project" value="InterPro"/>
</dbReference>
<dbReference type="CDD" id="cd05792">
    <property type="entry name" value="S1_eIF1AD_like"/>
    <property type="match status" value="1"/>
</dbReference>
<dbReference type="Gene3D" id="1.10.1200.180">
    <property type="match status" value="1"/>
</dbReference>
<dbReference type="Gene3D" id="2.40.50.140">
    <property type="entry name" value="Nucleic acid-binding proteins"/>
    <property type="match status" value="1"/>
</dbReference>
<dbReference type="InterPro" id="IPR039294">
    <property type="entry name" value="EIF1AD"/>
</dbReference>
<dbReference type="InterPro" id="IPR012340">
    <property type="entry name" value="NA-bd_OB-fold"/>
</dbReference>
<dbReference type="InterPro" id="IPR006196">
    <property type="entry name" value="RNA-binding_domain_S1_IF1"/>
</dbReference>
<dbReference type="InterPro" id="IPR001253">
    <property type="entry name" value="TIF_eIF-1A"/>
</dbReference>
<dbReference type="PANTHER" id="PTHR21641:SF0">
    <property type="entry name" value="RNA-BINDING PROTEIN EIF1AD-RELATED"/>
    <property type="match status" value="1"/>
</dbReference>
<dbReference type="PANTHER" id="PTHR21641">
    <property type="entry name" value="TRANSLATION INITIATION FACTOR-RELATED"/>
    <property type="match status" value="1"/>
</dbReference>
<dbReference type="Pfam" id="PF01176">
    <property type="entry name" value="eIF-1a"/>
    <property type="match status" value="1"/>
</dbReference>
<dbReference type="SMART" id="SM00652">
    <property type="entry name" value="eIF1a"/>
    <property type="match status" value="1"/>
</dbReference>
<dbReference type="SUPFAM" id="SSF50249">
    <property type="entry name" value="Nucleic acid-binding proteins"/>
    <property type="match status" value="1"/>
</dbReference>
<dbReference type="PROSITE" id="PS50832">
    <property type="entry name" value="S1_IF1_TYPE"/>
    <property type="match status" value="1"/>
</dbReference>
<feature type="chain" id="PRO_0000314154" description="Probable RNA-binding protein EIF1AD">
    <location>
        <begin position="1"/>
        <end position="166"/>
    </location>
</feature>
<feature type="domain" description="S1-like" evidence="6">
    <location>
        <begin position="5"/>
        <end position="89"/>
    </location>
</feature>
<feature type="region of interest" description="Disordered" evidence="7">
    <location>
        <begin position="114"/>
        <end position="166"/>
    </location>
</feature>
<feature type="short sequence motif" description="Nuclear localization signal" evidence="5">
    <location>
        <begin position="6"/>
        <end position="12"/>
    </location>
</feature>
<feature type="short sequence motif" description="Nuclear localization signal" evidence="5">
    <location>
        <begin position="56"/>
        <end position="65"/>
    </location>
</feature>
<feature type="compositionally biased region" description="Acidic residues" evidence="7">
    <location>
        <begin position="156"/>
        <end position="166"/>
    </location>
</feature>
<feature type="modified residue" description="Phosphothreonine" evidence="4">
    <location>
        <position position="33"/>
    </location>
</feature>
<feature type="modified residue" description="Phosphoserine" evidence="2">
    <location>
        <position position="132"/>
    </location>
</feature>
<feature type="modified residue" description="Phosphoserine" evidence="3">
    <location>
        <position position="136"/>
    </location>
</feature>
<feature type="modified residue" description="Phosphoserine" evidence="2">
    <location>
        <position position="137"/>
    </location>
</feature>
<feature type="modified residue" description="Phosphoserine" evidence="3">
    <location>
        <position position="138"/>
    </location>
</feature>
<feature type="modified residue" description="Phosphoserine" evidence="4">
    <location>
        <position position="156"/>
    </location>
</feature>
<feature type="modified residue" description="Phosphoserine" evidence="4">
    <location>
        <position position="160"/>
    </location>
</feature>
<gene>
    <name type="primary">EIF1AD</name>
</gene>
<protein>
    <recommendedName>
        <fullName>Probable RNA-binding protein EIF1AD</fullName>
    </recommendedName>
    <alternativeName>
        <fullName>Eukaryotic translation initiation factor 1A domain-containing protein</fullName>
    </alternativeName>
</protein>
<organism>
    <name type="scientific">Pongo abelii</name>
    <name type="common">Sumatran orangutan</name>
    <name type="synonym">Pongo pygmaeus abelii</name>
    <dbReference type="NCBI Taxonomy" id="9601"/>
    <lineage>
        <taxon>Eukaryota</taxon>
        <taxon>Metazoa</taxon>
        <taxon>Chordata</taxon>
        <taxon>Craniata</taxon>
        <taxon>Vertebrata</taxon>
        <taxon>Euteleostomi</taxon>
        <taxon>Mammalia</taxon>
        <taxon>Eutheria</taxon>
        <taxon>Euarchontoglires</taxon>
        <taxon>Primates</taxon>
        <taxon>Haplorrhini</taxon>
        <taxon>Catarrhini</taxon>
        <taxon>Hominidae</taxon>
        <taxon>Pongo</taxon>
    </lineage>
</organism>
<evidence type="ECO:0000250" key="1"/>
<evidence type="ECO:0000250" key="2">
    <source>
        <dbReference type="UniProtKB" id="Q3THJ3"/>
    </source>
</evidence>
<evidence type="ECO:0000250" key="3">
    <source>
        <dbReference type="UniProtKB" id="Q5RKI6"/>
    </source>
</evidence>
<evidence type="ECO:0000250" key="4">
    <source>
        <dbReference type="UniProtKB" id="Q8N9N8"/>
    </source>
</evidence>
<evidence type="ECO:0000255" key="5"/>
<evidence type="ECO:0000255" key="6">
    <source>
        <dbReference type="PROSITE-ProRule" id="PRU00181"/>
    </source>
</evidence>
<evidence type="ECO:0000256" key="7">
    <source>
        <dbReference type="SAM" id="MobiDB-lite"/>
    </source>
</evidence>
<evidence type="ECO:0000305" key="8"/>
<comment type="function">
    <text evidence="1">Plays a role into cellular response to oxidative stress. Decreases cell proliferation (By similarity).</text>
</comment>
<comment type="subunit">
    <text evidence="1">Interacts with GAPDH and STAT1.</text>
</comment>
<comment type="subcellular location">
    <subcellularLocation>
        <location evidence="1">Nucleus</location>
    </subcellularLocation>
</comment>
<comment type="similarity">
    <text evidence="8">Belongs to the EIF1AD family.</text>
</comment>
<reference key="1">
    <citation type="submission" date="2004-11" db="EMBL/GenBank/DDBJ databases">
        <authorList>
            <consortium name="The German cDNA consortium"/>
        </authorList>
    </citation>
    <scope>NUCLEOTIDE SEQUENCE [LARGE SCALE MRNA]</scope>
    <source>
        <tissue>Kidney</tissue>
    </source>
</reference>
<name>EIF1A_PONAB</name>
<keyword id="KW-0539">Nucleus</keyword>
<keyword id="KW-0597">Phosphoprotein</keyword>
<keyword id="KW-1185">Reference proteome</keyword>
<keyword id="KW-0694">RNA-binding</keyword>
<sequence>MSQATKRKHVVKEVLGEHIVPSDQQQIVRVLRTPGNNLHEVETAQGQRFLVSMPSKYRKNIWIKRGDFLIVDPIEEGEKVKAEISFVLCKDHVRSLQKEGFWPEAFSEVAEKHNNNRNRQTQPELPAEPQLSGEESSSEDDSDLFVNTNRRQYRESEEESEEEEAA</sequence>